<organism>
    <name type="scientific">Desulfovibrio desulfuricans (strain ATCC 27774 / DSM 6949 / MB)</name>
    <dbReference type="NCBI Taxonomy" id="525146"/>
    <lineage>
        <taxon>Bacteria</taxon>
        <taxon>Pseudomonadati</taxon>
        <taxon>Thermodesulfobacteriota</taxon>
        <taxon>Desulfovibrionia</taxon>
        <taxon>Desulfovibrionales</taxon>
        <taxon>Desulfovibrionaceae</taxon>
        <taxon>Desulfovibrio</taxon>
    </lineage>
</organism>
<accession>P81186</accession>
<accession>B8IYC9</accession>
<accession>Q599G8</accession>
<feature type="signal peptide" description="Tat-type signal" evidence="1 5">
    <location>
        <begin position="1"/>
        <end position="32"/>
    </location>
</feature>
<feature type="chain" id="PRO_0000019169" description="Periplasmic nitrate reductase">
    <location>
        <begin position="33"/>
        <end position="755"/>
    </location>
</feature>
<feature type="domain" description="4Fe-4S Mo/W bis-MGD-type" evidence="1">
    <location>
        <begin position="38"/>
        <end position="93"/>
    </location>
</feature>
<feature type="binding site" evidence="1 2 4 8 9 10 11 12 13 14 15">
    <location>
        <position position="45"/>
    </location>
    <ligand>
        <name>[4Fe-4S] cluster</name>
        <dbReference type="ChEBI" id="CHEBI:49883"/>
    </ligand>
</feature>
<feature type="binding site" evidence="1 2 4 8 9 10 11 12 13 14 15">
    <location>
        <position position="48"/>
    </location>
    <ligand>
        <name>[4Fe-4S] cluster</name>
        <dbReference type="ChEBI" id="CHEBI:49883"/>
    </ligand>
</feature>
<feature type="binding site" evidence="1 2 4 8 9 10 11 12 13 14 15">
    <location>
        <position position="52"/>
    </location>
    <ligand>
        <name>[4Fe-4S] cluster</name>
        <dbReference type="ChEBI" id="CHEBI:49883"/>
    </ligand>
</feature>
<feature type="binding site" evidence="1 2 4 8 9 10 11 12 13 14 15">
    <location>
        <position position="79"/>
    </location>
    <ligand>
        <name>[4Fe-4S] cluster</name>
        <dbReference type="ChEBI" id="CHEBI:49883"/>
    </ligand>
</feature>
<feature type="binding site" evidence="1 2 4 8 10 12 13 14 15">
    <location>
        <position position="81"/>
    </location>
    <ligand>
        <name>Mo-bis(molybdopterin guanine dinucleotide)</name>
        <dbReference type="ChEBI" id="CHEBI:60539"/>
    </ligand>
</feature>
<feature type="binding site" evidence="1 2 4 8 9 10 11 12 13 14 15">
    <location>
        <position position="143"/>
    </location>
    <ligand>
        <name>Mo-bis(molybdopterin guanine dinucleotide)</name>
        <dbReference type="ChEBI" id="CHEBI:60539"/>
    </ligand>
</feature>
<feature type="binding site" evidence="1 2 4 8 9 10 11 12 13 14 15">
    <location>
        <position position="168"/>
    </location>
    <ligand>
        <name>Mo-bis(molybdopterin guanine dinucleotide)</name>
        <dbReference type="ChEBI" id="CHEBI:60539"/>
    </ligand>
</feature>
<feature type="binding site" evidence="1 2 4 8 9 10 11 12 13 14 15">
    <location>
        <position position="172"/>
    </location>
    <ligand>
        <name>Mo-bis(molybdopterin guanine dinucleotide)</name>
        <dbReference type="ChEBI" id="CHEBI:60539"/>
    </ligand>
</feature>
<feature type="binding site" evidence="2 4 8 9 10 11 12 13 14 15">
    <location>
        <begin position="208"/>
        <end position="212"/>
    </location>
    <ligand>
        <name>Mo-bis(molybdopterin guanine dinucleotide)</name>
        <dbReference type="ChEBI" id="CHEBI:60539"/>
    </ligand>
</feature>
<feature type="binding site" evidence="2 4 8 9 10 11 12 13 14 15">
    <location>
        <begin position="236"/>
        <end position="238"/>
    </location>
    <ligand>
        <name>Mo-bis(molybdopterin guanine dinucleotide)</name>
        <dbReference type="ChEBI" id="CHEBI:60539"/>
    </ligand>
</feature>
<feature type="binding site" evidence="1 2 4 8 9 10 11 12 13 14 15">
    <location>
        <begin position="255"/>
        <end position="257"/>
    </location>
    <ligand>
        <name>Mo-bis(molybdopterin guanine dinucleotide)</name>
        <dbReference type="ChEBI" id="CHEBI:60539"/>
    </ligand>
</feature>
<feature type="binding site" evidence="1 2 4 8 9 10 11 12 13 14 15">
    <location>
        <position position="340"/>
    </location>
    <ligand>
        <name>Mo-bis(molybdopterin guanine dinucleotide)</name>
        <dbReference type="ChEBI" id="CHEBI:60539"/>
    </ligand>
</feature>
<feature type="binding site" evidence="1 2 4 8 10 11 12 13 14 15">
    <location>
        <position position="344"/>
    </location>
    <ligand>
        <name>Mo-bis(molybdopterin guanine dinucleotide)</name>
        <dbReference type="ChEBI" id="CHEBI:60539"/>
    </ligand>
</feature>
<feature type="binding site" evidence="1 2 4 8 9 10 11 12 13 14 15">
    <location>
        <position position="450"/>
    </location>
    <ligand>
        <name>Mo-bis(molybdopterin guanine dinucleotide)</name>
        <dbReference type="ChEBI" id="CHEBI:60539"/>
    </ligand>
</feature>
<feature type="binding site" evidence="2 4 8 9 10 11 12 13 14 15">
    <location>
        <begin position="475"/>
        <end position="477"/>
    </location>
    <ligand>
        <name>Mo-bis(molybdopterin guanine dinucleotide)</name>
        <dbReference type="ChEBI" id="CHEBI:60539"/>
    </ligand>
</feature>
<feature type="binding site" evidence="1 2 4 8 9 10 11 12 13 14 15">
    <location>
        <begin position="647"/>
        <end position="656"/>
    </location>
    <ligand>
        <name>Mo-bis(molybdopterin guanine dinucleotide)</name>
        <dbReference type="ChEBI" id="CHEBI:60539"/>
    </ligand>
</feature>
<feature type="binding site" evidence="7 11 12">
    <location>
        <begin position="648"/>
        <end position="653"/>
    </location>
    <ligand>
        <name>substrate</name>
    </ligand>
</feature>
<feature type="binding site" evidence="1 7 11 12">
    <location>
        <position position="721"/>
    </location>
    <ligand>
        <name>substrate</name>
    </ligand>
</feature>
<feature type="binding site" evidence="1 2 4 8 9 10 11 12 13 14 15">
    <location>
        <position position="729"/>
    </location>
    <ligand>
        <name>Mo-bis(molybdopterin guanine dinucleotide)</name>
        <dbReference type="ChEBI" id="CHEBI:60539"/>
    </ligand>
</feature>
<feature type="binding site" evidence="1 2 4 8 9 10 11 12 13 14 15">
    <location>
        <position position="746"/>
    </location>
    <ligand>
        <name>Mo-bis(molybdopterin guanine dinucleotide)</name>
        <dbReference type="ChEBI" id="CHEBI:60539"/>
    </ligand>
</feature>
<feature type="strand" evidence="17">
    <location>
        <begin position="38"/>
        <end position="44"/>
    </location>
</feature>
<feature type="strand" evidence="17">
    <location>
        <begin position="53"/>
        <end position="59"/>
    </location>
</feature>
<feature type="strand" evidence="17">
    <location>
        <begin position="62"/>
        <end position="68"/>
    </location>
</feature>
<feature type="turn" evidence="17">
    <location>
        <begin position="73"/>
        <end position="76"/>
    </location>
</feature>
<feature type="helix" evidence="17">
    <location>
        <begin position="80"/>
        <end position="83"/>
    </location>
</feature>
<feature type="helix" evidence="17">
    <location>
        <begin position="86"/>
        <end position="89"/>
    </location>
</feature>
<feature type="strand" evidence="18">
    <location>
        <begin position="99"/>
        <end position="103"/>
    </location>
</feature>
<feature type="strand" evidence="18">
    <location>
        <begin position="108"/>
        <end position="110"/>
    </location>
</feature>
<feature type="helix" evidence="17">
    <location>
        <begin position="113"/>
        <end position="131"/>
    </location>
</feature>
<feature type="helix" evidence="17">
    <location>
        <begin position="133"/>
        <end position="135"/>
    </location>
</feature>
<feature type="strand" evidence="17">
    <location>
        <begin position="136"/>
        <end position="140"/>
    </location>
</feature>
<feature type="helix" evidence="17">
    <location>
        <begin position="146"/>
        <end position="158"/>
    </location>
</feature>
<feature type="strand" evidence="17">
    <location>
        <begin position="165"/>
        <end position="167"/>
    </location>
</feature>
<feature type="helix" evidence="17">
    <location>
        <begin position="168"/>
        <end position="170"/>
    </location>
</feature>
<feature type="turn" evidence="17">
    <location>
        <begin position="171"/>
        <end position="173"/>
    </location>
</feature>
<feature type="helix" evidence="17">
    <location>
        <begin position="174"/>
        <end position="184"/>
    </location>
</feature>
<feature type="helix" evidence="17">
    <location>
        <begin position="193"/>
        <end position="197"/>
    </location>
</feature>
<feature type="strand" evidence="17">
    <location>
        <begin position="200"/>
        <end position="206"/>
    </location>
</feature>
<feature type="helix" evidence="17">
    <location>
        <begin position="209"/>
        <end position="212"/>
    </location>
</feature>
<feature type="helix" evidence="17">
    <location>
        <begin position="214"/>
        <end position="226"/>
    </location>
</feature>
<feature type="strand" evidence="17">
    <location>
        <begin position="231"/>
        <end position="235"/>
    </location>
</feature>
<feature type="helix" evidence="17">
    <location>
        <begin position="241"/>
        <end position="245"/>
    </location>
</feature>
<feature type="strand" evidence="17">
    <location>
        <begin position="247"/>
        <end position="250"/>
    </location>
</feature>
<feature type="turn" evidence="17">
    <location>
        <begin position="254"/>
        <end position="256"/>
    </location>
</feature>
<feature type="helix" evidence="17">
    <location>
        <begin position="257"/>
        <end position="270"/>
    </location>
</feature>
<feature type="helix" evidence="17">
    <location>
        <begin position="276"/>
        <end position="282"/>
    </location>
</feature>
<feature type="strand" evidence="17">
    <location>
        <begin position="283"/>
        <end position="286"/>
    </location>
</feature>
<feature type="helix" evidence="17">
    <location>
        <begin position="295"/>
        <end position="302"/>
    </location>
</feature>
<feature type="helix" evidence="17">
    <location>
        <begin position="303"/>
        <end position="305"/>
    </location>
</feature>
<feature type="helix" evidence="17">
    <location>
        <begin position="307"/>
        <end position="314"/>
    </location>
</feature>
<feature type="helix" evidence="17">
    <location>
        <begin position="318"/>
        <end position="330"/>
    </location>
</feature>
<feature type="strand" evidence="17">
    <location>
        <begin position="331"/>
        <end position="338"/>
    </location>
</feature>
<feature type="turn" evidence="17">
    <location>
        <begin position="340"/>
        <end position="342"/>
    </location>
</feature>
<feature type="strand" evidence="17">
    <location>
        <begin position="343"/>
        <end position="345"/>
    </location>
</feature>
<feature type="helix" evidence="17">
    <location>
        <begin position="348"/>
        <end position="362"/>
    </location>
</feature>
<feature type="strand" evidence="17">
    <location>
        <begin position="370"/>
        <end position="374"/>
    </location>
</feature>
<feature type="strand" evidence="18">
    <location>
        <begin position="378"/>
        <end position="380"/>
    </location>
</feature>
<feature type="helix" evidence="17">
    <location>
        <begin position="381"/>
        <end position="384"/>
    </location>
</feature>
<feature type="turn" evidence="17">
    <location>
        <begin position="385"/>
        <end position="389"/>
    </location>
</feature>
<feature type="turn" evidence="17">
    <location>
        <begin position="396"/>
        <end position="398"/>
    </location>
</feature>
<feature type="helix" evidence="17">
    <location>
        <begin position="404"/>
        <end position="414"/>
    </location>
</feature>
<feature type="helix" evidence="17">
    <location>
        <begin position="429"/>
        <end position="438"/>
    </location>
</feature>
<feature type="strand" evidence="17">
    <location>
        <begin position="443"/>
        <end position="448"/>
    </location>
</feature>
<feature type="helix" evidence="17">
    <location>
        <begin position="451"/>
        <end position="454"/>
    </location>
</feature>
<feature type="strand" evidence="17">
    <location>
        <begin position="455"/>
        <end position="457"/>
    </location>
</feature>
<feature type="helix" evidence="17">
    <location>
        <begin position="458"/>
        <end position="465"/>
    </location>
</feature>
<feature type="strand" evidence="17">
    <location>
        <begin position="471"/>
        <end position="475"/>
    </location>
</feature>
<feature type="helix" evidence="17">
    <location>
        <begin position="482"/>
        <end position="485"/>
    </location>
</feature>
<feature type="strand" evidence="17">
    <location>
        <begin position="488"/>
        <end position="491"/>
    </location>
</feature>
<feature type="helix" evidence="17">
    <location>
        <begin position="496"/>
        <end position="498"/>
    </location>
</feature>
<feature type="strand" evidence="17">
    <location>
        <begin position="501"/>
        <end position="504"/>
    </location>
</feature>
<feature type="strand" evidence="17">
    <location>
        <begin position="508"/>
        <end position="513"/>
    </location>
</feature>
<feature type="helix" evidence="17">
    <location>
        <begin position="526"/>
        <end position="537"/>
    </location>
</feature>
<feature type="turn" evidence="17">
    <location>
        <begin position="541"/>
        <end position="544"/>
    </location>
</feature>
<feature type="helix" evidence="17">
    <location>
        <begin position="549"/>
        <end position="560"/>
    </location>
</feature>
<feature type="helix" evidence="17">
    <location>
        <begin position="572"/>
        <end position="577"/>
    </location>
</feature>
<feature type="strand" evidence="17">
    <location>
        <begin position="581"/>
        <end position="583"/>
    </location>
</feature>
<feature type="turn" evidence="17">
    <location>
        <begin position="599"/>
        <end position="601"/>
    </location>
</feature>
<feature type="strand" evidence="17">
    <location>
        <begin position="610"/>
        <end position="613"/>
    </location>
</feature>
<feature type="strand" evidence="17">
    <location>
        <begin position="623"/>
        <end position="626"/>
    </location>
</feature>
<feature type="strand" evidence="17">
    <location>
        <begin position="639"/>
        <end position="641"/>
    </location>
</feature>
<feature type="strand" evidence="17">
    <location>
        <begin position="643"/>
        <end position="648"/>
    </location>
</feature>
<feature type="strand" evidence="16">
    <location>
        <begin position="657"/>
        <end position="659"/>
    </location>
</feature>
<feature type="helix" evidence="17">
    <location>
        <begin position="660"/>
        <end position="662"/>
    </location>
</feature>
<feature type="helix" evidence="17">
    <location>
        <begin position="664"/>
        <end position="667"/>
    </location>
</feature>
<feature type="strand" evidence="17">
    <location>
        <begin position="675"/>
        <end position="678"/>
    </location>
</feature>
<feature type="helix" evidence="17">
    <location>
        <begin position="679"/>
        <end position="685"/>
    </location>
</feature>
<feature type="strand" evidence="17">
    <location>
        <begin position="692"/>
        <end position="697"/>
    </location>
</feature>
<feature type="strand" evidence="17">
    <location>
        <begin position="700"/>
        <end position="712"/>
    </location>
</feature>
<feature type="strand" evidence="17">
    <location>
        <begin position="716"/>
        <end position="720"/>
    </location>
</feature>
<feature type="helix" evidence="17">
    <location>
        <begin position="728"/>
        <end position="730"/>
    </location>
</feature>
<feature type="turn" evidence="17">
    <location>
        <begin position="738"/>
        <end position="740"/>
    </location>
</feature>
<feature type="strand" evidence="17">
    <location>
        <begin position="748"/>
        <end position="754"/>
    </location>
</feature>
<gene>
    <name evidence="1" type="primary">napA</name>
    <name type="synonym">nap</name>
    <name type="ordered locus">Ddes_0616</name>
</gene>
<protein>
    <recommendedName>
        <fullName evidence="1">Periplasmic nitrate reductase</fullName>
        <ecNumber evidence="1 3 5">1.9.6.1</ecNumber>
    </recommendedName>
</protein>
<reference key="1">
    <citation type="journal article" date="1999" name="Structure">
        <title>Crystal structure of the first dissimilatory nitrate reductase at 1.9 A solved by MAD methods.</title>
        <authorList>
            <person name="Dias J.M."/>
            <person name="Than M.E."/>
            <person name="Humm A."/>
            <person name="Huber R."/>
            <person name="Bourenkov G.P."/>
            <person name="Bartunik H.D."/>
            <person name="Bursakov S."/>
            <person name="Calvete J.J."/>
            <person name="Caldeira J."/>
            <person name="Carneiro C."/>
            <person name="Moura J.J.G."/>
            <person name="Moura I."/>
            <person name="Romao M.J."/>
        </authorList>
    </citation>
    <scope>NUCLEOTIDE SEQUENCE [GENOMIC DNA]</scope>
    <scope>X-RAY CRYSTALLOGRAPHY (1.9 ANGSTROMS) IN COMPLEX WITH IRON-SULFUR (4FE-4S) AND MOLYBDENUM MOLYBDOPTERIN COFACTOR</scope>
    <scope>COFACTOR</scope>
    <source>
        <strain>ATCC 27774 / DSM 6949 / MB</strain>
    </source>
</reference>
<reference key="2">
    <citation type="journal article" date="2005" name="FEMS Microbiol. Lett.">
        <title>Nitrate reduction by Desulfovibrio desulfuricans: a periplasmic nitrate reductase system that lacks NapB, but includes a unique tetraheme c-type cytochrome, NapM.</title>
        <authorList>
            <person name="Marietou A."/>
            <person name="Richardson D."/>
            <person name="Cole J."/>
            <person name="Mohan S."/>
        </authorList>
    </citation>
    <scope>NUCLEOTIDE SEQUENCE [GENOMIC DNA]</scope>
</reference>
<reference key="3">
    <citation type="submission" date="2009-01" db="EMBL/GenBank/DDBJ databases">
        <title>Complete sequence of Desulfovibrio desulfuricans subsp. desulfuricans str. ATCC 27774.</title>
        <authorList>
            <consortium name="US DOE Joint Genome Institute"/>
            <person name="Lucas S."/>
            <person name="Copeland A."/>
            <person name="Lapidus A."/>
            <person name="Glavina del Rio T."/>
            <person name="Tice H."/>
            <person name="Bruce D."/>
            <person name="Goodwin L."/>
            <person name="Pitluck S."/>
            <person name="Sims D."/>
            <person name="Lu M."/>
            <person name="Kiss H."/>
            <person name="Meineke L."/>
            <person name="Brettin T."/>
            <person name="Detter J.C."/>
            <person name="Han C."/>
            <person name="Larimer F."/>
            <person name="Land M."/>
            <person name="Hauser L."/>
            <person name="Kyrpides N."/>
            <person name="Ovchinnikova G."/>
            <person name="Hazen T.C."/>
        </authorList>
    </citation>
    <scope>NUCLEOTIDE SEQUENCE [LARGE SCALE GENOMIC DNA]</scope>
    <source>
        <strain>ATCC 27774 / DSM 6949 / MB</strain>
    </source>
</reference>
<reference key="4">
    <citation type="journal article" date="1997" name="Biochem. Biophys. Res. Commun.">
        <title>Enzymatic properties and effect of ionic strength on periplasmic nitrate reductase (NAP) from Desulfovibrio desulfuricans ATCC 27774.</title>
        <authorList>
            <person name="Bursakov S.A."/>
            <person name="Carneiro C."/>
            <person name="Almendra M.J."/>
            <person name="Duarte R.O."/>
            <person name="Caldeira J."/>
            <person name="Moura I."/>
            <person name="Moura J.J.G."/>
        </authorList>
    </citation>
    <scope>PROTEIN SEQUENCE OF 33-73</scope>
    <scope>FUNCTION</scope>
    <scope>CATALYTIC ACTIVITY</scope>
    <scope>BIOPHYSICOCHEMICAL PROPERTIES</scope>
    <scope>ACTIVITY REGULATION</scope>
    <scope>COFACTOR</scope>
    <source>
        <strain>ATCC 27774 / DSM 6949 / MB</strain>
    </source>
</reference>
<reference key="5">
    <citation type="journal article" date="1995" name="Anaerobe">
        <title>Isolation and preliminary characterization of a soluble nitrate reductase from the sulfate-reducing bacterium Desulfovibrio desulfuricans 27774.</title>
        <authorList>
            <person name="Bursakov S."/>
            <person name="Liu M.-Y."/>
            <person name="Payne W.J."/>
            <person name="Legall J."/>
            <person name="Moura I."/>
            <person name="Moura J.J.G."/>
        </authorList>
    </citation>
    <scope>FUNCTION</scope>
    <scope>CATALYTIC ACTIVITY</scope>
    <scope>BIOPHYSICOCHEMICAL PROPERTIES</scope>
    <scope>SUBCELLULAR LOCATION</scope>
    <scope>COFACTOR</scope>
    <scope>SUBUNIT</scope>
    <source>
        <strain>ATCC 27774 / DSM 6949 / MB</strain>
    </source>
</reference>
<reference key="6">
    <citation type="journal article" date="2008" name="J. Biol. Inorg. Chem.">
        <title>Periplasmic nitrate reductase revisited: a sulfur atom completes the sixth coordination of the catalytic molybdenum.</title>
        <authorList>
            <person name="Najmudin S."/>
            <person name="Gonzalez P.J."/>
            <person name="Trincao J."/>
            <person name="Coelho C."/>
            <person name="Mukhopadhyay A."/>
            <person name="Cerqueira N.M."/>
            <person name="Romao C.C."/>
            <person name="Moura I."/>
            <person name="Moura J.J."/>
            <person name="Brondino C.D."/>
            <person name="Romao M.J."/>
        </authorList>
    </citation>
    <scope>X-RAY CRYSTALLOGRAPHY (1.99 ANGSTROMS) OF 33-755 IN COMPLEX WITH IRON-SULFUR (4FE-4S); MOLYBDENUM MOLYBDOPTERIN COFACTOR AND SUBSTRATE</scope>
    <scope>COFACTOR</scope>
</reference>
<name>NAPA_DESDA</name>
<dbReference type="EC" id="1.9.6.1" evidence="1 3 5"/>
<dbReference type="EMBL" id="Y18045">
    <property type="protein sequence ID" value="CAA77019.1"/>
    <property type="molecule type" value="Genomic_DNA"/>
</dbReference>
<dbReference type="EMBL" id="AJ920046">
    <property type="protein sequence ID" value="CAI72603.1"/>
    <property type="molecule type" value="Genomic_DNA"/>
</dbReference>
<dbReference type="EMBL" id="CP001358">
    <property type="protein sequence ID" value="ACL48525.1"/>
    <property type="molecule type" value="Genomic_DNA"/>
</dbReference>
<dbReference type="PIR" id="PC4422">
    <property type="entry name" value="PC4422"/>
</dbReference>
<dbReference type="PDB" id="2JIM">
    <property type="method" value="X-ray"/>
    <property type="resolution" value="2.45 A"/>
    <property type="chains" value="A=33-755"/>
</dbReference>
<dbReference type="PDB" id="2JIO">
    <property type="method" value="X-ray"/>
    <property type="resolution" value="2.20 A"/>
    <property type="chains" value="A=33-755"/>
</dbReference>
<dbReference type="PDB" id="2JIP">
    <property type="method" value="X-ray"/>
    <property type="resolution" value="2.30 A"/>
    <property type="chains" value="A=33-755"/>
</dbReference>
<dbReference type="PDB" id="2JIQ">
    <property type="method" value="X-ray"/>
    <property type="resolution" value="2.44 A"/>
    <property type="chains" value="A=33-755"/>
</dbReference>
<dbReference type="PDB" id="2JIR">
    <property type="method" value="X-ray"/>
    <property type="resolution" value="2.35 A"/>
    <property type="chains" value="A=33-755"/>
</dbReference>
<dbReference type="PDB" id="2NAP">
    <property type="method" value="X-ray"/>
    <property type="resolution" value="1.90 A"/>
    <property type="chains" value="A=33-755"/>
</dbReference>
<dbReference type="PDB" id="2V3V">
    <property type="method" value="X-ray"/>
    <property type="resolution" value="1.99 A"/>
    <property type="chains" value="A=33-755"/>
</dbReference>
<dbReference type="PDB" id="2V45">
    <property type="method" value="X-ray"/>
    <property type="resolution" value="2.40 A"/>
    <property type="chains" value="A=33-755"/>
</dbReference>
<dbReference type="PDBsum" id="2JIM"/>
<dbReference type="PDBsum" id="2JIO"/>
<dbReference type="PDBsum" id="2JIP"/>
<dbReference type="PDBsum" id="2JIQ"/>
<dbReference type="PDBsum" id="2JIR"/>
<dbReference type="PDBsum" id="2NAP"/>
<dbReference type="PDBsum" id="2V3V"/>
<dbReference type="PDBsum" id="2V45"/>
<dbReference type="SMR" id="P81186"/>
<dbReference type="STRING" id="525146.Ddes_0616"/>
<dbReference type="KEGG" id="dds:Ddes_0616"/>
<dbReference type="eggNOG" id="COG0243">
    <property type="taxonomic scope" value="Bacteria"/>
</dbReference>
<dbReference type="HOGENOM" id="CLU_000422_13_4_7"/>
<dbReference type="BRENDA" id="1.9.6.1">
    <property type="organism ID" value="1905"/>
</dbReference>
<dbReference type="EvolutionaryTrace" id="P81186"/>
<dbReference type="GO" id="GO:0016020">
    <property type="term" value="C:membrane"/>
    <property type="evidence" value="ECO:0007669"/>
    <property type="project" value="TreeGrafter"/>
</dbReference>
<dbReference type="GO" id="GO:0009325">
    <property type="term" value="C:nitrate reductase complex"/>
    <property type="evidence" value="ECO:0007669"/>
    <property type="project" value="TreeGrafter"/>
</dbReference>
<dbReference type="GO" id="GO:0042597">
    <property type="term" value="C:periplasmic space"/>
    <property type="evidence" value="ECO:0007669"/>
    <property type="project" value="UniProtKB-SubCell"/>
</dbReference>
<dbReference type="GO" id="GO:0051539">
    <property type="term" value="F:4 iron, 4 sulfur cluster binding"/>
    <property type="evidence" value="ECO:0007669"/>
    <property type="project" value="UniProtKB-KW"/>
</dbReference>
<dbReference type="GO" id="GO:0009055">
    <property type="term" value="F:electron transfer activity"/>
    <property type="evidence" value="ECO:0007669"/>
    <property type="project" value="UniProtKB-UniRule"/>
</dbReference>
<dbReference type="GO" id="GO:0005506">
    <property type="term" value="F:iron ion binding"/>
    <property type="evidence" value="ECO:0007669"/>
    <property type="project" value="UniProtKB-UniRule"/>
</dbReference>
<dbReference type="GO" id="GO:0030151">
    <property type="term" value="F:molybdenum ion binding"/>
    <property type="evidence" value="ECO:0007669"/>
    <property type="project" value="InterPro"/>
</dbReference>
<dbReference type="GO" id="GO:0043546">
    <property type="term" value="F:molybdopterin cofactor binding"/>
    <property type="evidence" value="ECO:0007669"/>
    <property type="project" value="InterPro"/>
</dbReference>
<dbReference type="GO" id="GO:0050140">
    <property type="term" value="F:nitrate reductase (cytochrome) activity"/>
    <property type="evidence" value="ECO:0007669"/>
    <property type="project" value="UniProtKB-EC"/>
</dbReference>
<dbReference type="GO" id="GO:0006777">
    <property type="term" value="P:Mo-molybdopterin cofactor biosynthetic process"/>
    <property type="evidence" value="ECO:0007669"/>
    <property type="project" value="UniProtKB-UniRule"/>
</dbReference>
<dbReference type="GO" id="GO:0042128">
    <property type="term" value="P:nitrate assimilation"/>
    <property type="evidence" value="ECO:0007669"/>
    <property type="project" value="UniProtKB-UniRule"/>
</dbReference>
<dbReference type="CDD" id="cd02791">
    <property type="entry name" value="MopB_CT_Nitrate-R-NapA-like"/>
    <property type="match status" value="1"/>
</dbReference>
<dbReference type="CDD" id="cd02754">
    <property type="entry name" value="MopB_Nitrate-R-NapA-like"/>
    <property type="match status" value="1"/>
</dbReference>
<dbReference type="Gene3D" id="2.40.40.20">
    <property type="match status" value="1"/>
</dbReference>
<dbReference type="Gene3D" id="3.40.50.740">
    <property type="match status" value="1"/>
</dbReference>
<dbReference type="Gene3D" id="2.20.25.90">
    <property type="entry name" value="ADC-like domains"/>
    <property type="match status" value="1"/>
</dbReference>
<dbReference type="Gene3D" id="3.40.228.10">
    <property type="entry name" value="Dimethylsulfoxide Reductase, domain 2"/>
    <property type="match status" value="1"/>
</dbReference>
<dbReference type="HAMAP" id="MF_01630">
    <property type="entry name" value="Nitrate_reduct_NapA"/>
    <property type="match status" value="1"/>
</dbReference>
<dbReference type="InterPro" id="IPR009010">
    <property type="entry name" value="Asp_de-COase-like_dom_sf"/>
</dbReference>
<dbReference type="InterPro" id="IPR041957">
    <property type="entry name" value="CT_Nitrate-R-NapA-like"/>
</dbReference>
<dbReference type="InterPro" id="IPR006657">
    <property type="entry name" value="MoPterin_dinucl-bd_dom"/>
</dbReference>
<dbReference type="InterPro" id="IPR006656">
    <property type="entry name" value="Mopterin_OxRdtase"/>
</dbReference>
<dbReference type="InterPro" id="IPR006963">
    <property type="entry name" value="Mopterin_OxRdtase_4Fe-4S_dom"/>
</dbReference>
<dbReference type="InterPro" id="IPR010051">
    <property type="entry name" value="Periplasm_NO3_reductase_lsu"/>
</dbReference>
<dbReference type="InterPro" id="IPR050123">
    <property type="entry name" value="Prok_molybdopt-oxidoreductase"/>
</dbReference>
<dbReference type="InterPro" id="IPR006311">
    <property type="entry name" value="TAT_signal"/>
</dbReference>
<dbReference type="PANTHER" id="PTHR43105:SF11">
    <property type="entry name" value="PERIPLASMIC NITRATE REDUCTASE"/>
    <property type="match status" value="1"/>
</dbReference>
<dbReference type="PANTHER" id="PTHR43105">
    <property type="entry name" value="RESPIRATORY NITRATE REDUCTASE"/>
    <property type="match status" value="1"/>
</dbReference>
<dbReference type="Pfam" id="PF04879">
    <property type="entry name" value="Molybdop_Fe4S4"/>
    <property type="match status" value="1"/>
</dbReference>
<dbReference type="Pfam" id="PF00384">
    <property type="entry name" value="Molybdopterin"/>
    <property type="match status" value="1"/>
</dbReference>
<dbReference type="Pfam" id="PF01568">
    <property type="entry name" value="Molydop_binding"/>
    <property type="match status" value="1"/>
</dbReference>
<dbReference type="PIRSF" id="PIRSF000144">
    <property type="entry name" value="CbbBc"/>
    <property type="match status" value="1"/>
</dbReference>
<dbReference type="SMART" id="SM00926">
    <property type="entry name" value="Molybdop_Fe4S4"/>
    <property type="match status" value="1"/>
</dbReference>
<dbReference type="SUPFAM" id="SSF50692">
    <property type="entry name" value="ADC-like"/>
    <property type="match status" value="1"/>
</dbReference>
<dbReference type="SUPFAM" id="SSF53706">
    <property type="entry name" value="Formate dehydrogenase/DMSO reductase, domains 1-3"/>
    <property type="match status" value="1"/>
</dbReference>
<dbReference type="PROSITE" id="PS51669">
    <property type="entry name" value="4FE4S_MOW_BIS_MGD"/>
    <property type="match status" value="1"/>
</dbReference>
<dbReference type="PROSITE" id="PS51318">
    <property type="entry name" value="TAT"/>
    <property type="match status" value="1"/>
</dbReference>
<proteinExistence type="evidence at protein level"/>
<evidence type="ECO:0000255" key="1">
    <source>
        <dbReference type="HAMAP-Rule" id="MF_01630"/>
    </source>
</evidence>
<evidence type="ECO:0000269" key="2">
    <source>
    </source>
</evidence>
<evidence type="ECO:0000269" key="3">
    <source>
    </source>
</evidence>
<evidence type="ECO:0000269" key="4">
    <source>
    </source>
</evidence>
<evidence type="ECO:0000269" key="5">
    <source>
    </source>
</evidence>
<evidence type="ECO:0000305" key="6"/>
<evidence type="ECO:0000305" key="7">
    <source>
    </source>
</evidence>
<evidence type="ECO:0007744" key="8">
    <source>
        <dbReference type="PDB" id="2JIM"/>
    </source>
</evidence>
<evidence type="ECO:0007744" key="9">
    <source>
        <dbReference type="PDB" id="2JIO"/>
    </source>
</evidence>
<evidence type="ECO:0007744" key="10">
    <source>
        <dbReference type="PDB" id="2JIP"/>
    </source>
</evidence>
<evidence type="ECO:0007744" key="11">
    <source>
        <dbReference type="PDB" id="2JIQ"/>
    </source>
</evidence>
<evidence type="ECO:0007744" key="12">
    <source>
        <dbReference type="PDB" id="2JIR"/>
    </source>
</evidence>
<evidence type="ECO:0007744" key="13">
    <source>
        <dbReference type="PDB" id="2NAP"/>
    </source>
</evidence>
<evidence type="ECO:0007744" key="14">
    <source>
        <dbReference type="PDB" id="2V3V"/>
    </source>
</evidence>
<evidence type="ECO:0007744" key="15">
    <source>
        <dbReference type="PDB" id="2V45"/>
    </source>
</evidence>
<evidence type="ECO:0007829" key="16">
    <source>
        <dbReference type="PDB" id="2JIO"/>
    </source>
</evidence>
<evidence type="ECO:0007829" key="17">
    <source>
        <dbReference type="PDB" id="2NAP"/>
    </source>
</evidence>
<evidence type="ECO:0007829" key="18">
    <source>
        <dbReference type="PDB" id="2V3V"/>
    </source>
</evidence>
<sequence>MSTSRRDFLKYFAMSAAVAAASGAGFGSLALAADNRPEKWVKGVCRYCGTGCGVLVGVKDGKAVAIQGDPNNHNAGLLCLKGSLLIPVLNSKERVTQPLVRRHKGGKLEPVSWDEALDLMASRFRSSIDMYGPNSVAWYGSGQCLTEESYVANKIFKGGFGTNNVDGNPRLCMASAVGGYVTSFGKDEPMGTYADIDQATCFFIIGSNTSEAHPVLFRRIARRKQVEPGVKIIVADPRRTNTSRIADMHVAFRPGTDLAFMHSMAWVIINEELDNPRFWQRYVNFMDAEGKPSDFEGYKAFLENYRPEKVAEICRVPVEQIYGAARAFAESAATMSLWCMGINQRVQGVFANNLIHNLHLITGQICRPGATSFSLTGQPNACGGVRDGGALSHLLPAGRAIPNAKHRAEMEKLWGLPEGRIAPEPGYHTVALFEALGRGDVKCMIICETNPAHTLPNLNKVHKAMSHPESFIVCIEAFPDAVTLEYADLVLPPAFWCERDGVYGCGERRYSLTEKAVDPPGQCRPTVNTLVEFARRAGVDPQLVNFRNAEDVWNEWRMVSKGTTYDFWGMTRERLRKESGLIWPCPSEDHPGTSLRYVRGQDPCVPADHPDRFFFYGKPDGRAVIWMRPAKGAAEEPDAEYPLYLTSMRVIDHWHTATMTGKVPELQKANPIAFVEINEEDAARTGIKHGDSVIVETRRDAMELPARVSDVCRPGLIAVPFFDPKKLVNKLFLDATDPVSREPEYKICAARVRKA</sequence>
<keyword id="KW-0002">3D-structure</keyword>
<keyword id="KW-0004">4Fe-4S</keyword>
<keyword id="KW-0903">Direct protein sequencing</keyword>
<keyword id="KW-0249">Electron transport</keyword>
<keyword id="KW-0408">Iron</keyword>
<keyword id="KW-0411">Iron-sulfur</keyword>
<keyword id="KW-0479">Metal-binding</keyword>
<keyword id="KW-0500">Molybdenum</keyword>
<keyword id="KW-0534">Nitrate assimilation</keyword>
<keyword id="KW-0560">Oxidoreductase</keyword>
<keyword id="KW-0574">Periplasm</keyword>
<keyword id="KW-0732">Signal</keyword>
<keyword id="KW-0813">Transport</keyword>
<comment type="function">
    <text evidence="1 3 5">Catalytic subunit of the periplasmic nitrate reductase complex NapAB. Receives electrons from NapB and catalyzes the reduction of nitrate to nitrite.</text>
</comment>
<comment type="catalytic activity">
    <reaction evidence="1 3 5">
        <text>2 Fe(II)-[cytochrome] + nitrate + 2 H(+) = 2 Fe(III)-[cytochrome] + nitrite + H2O</text>
        <dbReference type="Rhea" id="RHEA:12909"/>
        <dbReference type="Rhea" id="RHEA-COMP:11777"/>
        <dbReference type="Rhea" id="RHEA-COMP:11778"/>
        <dbReference type="ChEBI" id="CHEBI:15377"/>
        <dbReference type="ChEBI" id="CHEBI:15378"/>
        <dbReference type="ChEBI" id="CHEBI:16301"/>
        <dbReference type="ChEBI" id="CHEBI:17632"/>
        <dbReference type="ChEBI" id="CHEBI:29033"/>
        <dbReference type="ChEBI" id="CHEBI:29034"/>
        <dbReference type="EC" id="1.9.6.1"/>
    </reaction>
</comment>
<comment type="cofactor">
    <cofactor evidence="1 2 3 4 5">
        <name>[4Fe-4S] cluster</name>
        <dbReference type="ChEBI" id="CHEBI:49883"/>
    </cofactor>
    <text evidence="1 2 3 4">Binds 1 [4Fe-4S] cluster.</text>
</comment>
<comment type="cofactor">
    <cofactor evidence="1 2 3 4 5">
        <name>Mo-bis(molybdopterin guanine dinucleotide)</name>
        <dbReference type="ChEBI" id="CHEBI:60539"/>
    </cofactor>
    <text evidence="1 2 3 4">Binds 1 molybdenum-bis(molybdopterin guanine dinucleotide) (Mo-bis-MGD) cofactor per subunit.</text>
</comment>
<comment type="activity regulation">
    <text evidence="5">Activated by potassium and sodium ions and inhibited by magnesium and calcium ions.</text>
</comment>
<comment type="biophysicochemical properties">
    <kinetics>
        <KM evidence="5">12 uM for nitrate (in the presence of NaCl)</KM>
        <KM evidence="3">20 uM for nitrate</KM>
        <KM evidence="5">32 uM for nitrate (in the absence of NaCl)</KM>
    </kinetics>
    <phDependence>
        <text evidence="3 5">Optimum pH is between 8 and 9.5.</text>
    </phDependence>
</comment>
<comment type="subunit">
    <text evidence="1 3">Monomer (PubMed:16887508). Component of the periplasmic nitrate reductase NapAB complex composed of NapA and NapB (By similarity).</text>
</comment>
<comment type="subcellular location">
    <subcellularLocation>
        <location evidence="1 3">Periplasm</location>
    </subcellularLocation>
</comment>
<comment type="PTM">
    <text evidence="1 5">Predicted to be exported by the Tat system (By similarity). The position of the signal peptide cleavage has been experimentally proven (PubMed:9367852).</text>
</comment>
<comment type="similarity">
    <text evidence="1 6">Belongs to the prokaryotic molybdopterin-containing oxidoreductase family. NasA/NapA/NarB subfamily.</text>
</comment>